<organism>
    <name type="scientific">Danio rerio</name>
    <name type="common">Zebrafish</name>
    <name type="synonym">Brachydanio rerio</name>
    <dbReference type="NCBI Taxonomy" id="7955"/>
    <lineage>
        <taxon>Eukaryota</taxon>
        <taxon>Metazoa</taxon>
        <taxon>Chordata</taxon>
        <taxon>Craniata</taxon>
        <taxon>Vertebrata</taxon>
        <taxon>Euteleostomi</taxon>
        <taxon>Actinopterygii</taxon>
        <taxon>Neopterygii</taxon>
        <taxon>Teleostei</taxon>
        <taxon>Ostariophysi</taxon>
        <taxon>Cypriniformes</taxon>
        <taxon>Danionidae</taxon>
        <taxon>Danioninae</taxon>
        <taxon>Danio</taxon>
    </lineage>
</organism>
<feature type="chain" id="PRO_0000297654" description="Clavesin-2">
    <location>
        <begin position="1"/>
        <end position="329"/>
    </location>
</feature>
<feature type="domain" description="CRAL-TRIO" evidence="2">
    <location>
        <begin position="96"/>
        <end position="257"/>
    </location>
</feature>
<feature type="region of interest" description="Disordered" evidence="3">
    <location>
        <begin position="293"/>
        <end position="329"/>
    </location>
</feature>
<feature type="compositionally biased region" description="Basic and acidic residues" evidence="3">
    <location>
        <begin position="308"/>
        <end position="319"/>
    </location>
</feature>
<protein>
    <recommendedName>
        <fullName>Clavesin-2</fullName>
    </recommendedName>
    <alternativeName>
        <fullName>Retinaldehyde-binding protein 1-like 2</fullName>
    </alternativeName>
</protein>
<name>CLVS2_DANRE</name>
<proteinExistence type="evidence at transcript level"/>
<gene>
    <name type="primary">clvs2</name>
    <name type="synonym">rlbp1l2</name>
    <name type="ORF">si:ch211-199i15.4</name>
</gene>
<sequence length="329" mass="38120">MTHLQAGLSPETLEKAKVELKENPDTLHQDIQEVRDMIITRPDIGFLRTDDAFILRFLRARKFNHFEAFRLLAQYFEYRQQNLDMFKNLKATDPGIKQALKDGFPGVLSNLDRYGRKILVLFAANWDQSRYTFVDILRAILLSLEAMIEDPELQVNGFVLIIDWSNFTFKQASKLTPSMLRLAIEGLQDSFPARFGGIHFVNQPWYIHALYTVIRPFLKDKTRKRIFMHGNNLNSLHQLILPEILPSELGGMLPPYDMGTWARTLLDHAYDEETDYCPESYTLSVKDLEKDLSPKTMKRSQSVVEPGVLKRPEKVKSEEENMQPLLSLD</sequence>
<comment type="function">
    <text evidence="1">Required for normal morphology of late endosomes and/or lysosomes in neurons. Binds phosphatidylinositol 3,5-bisphosphate (PtdIns(3,5)P2) (By similarity).</text>
</comment>
<comment type="subcellular location">
    <subcellularLocation>
        <location evidence="1">Golgi apparatus</location>
        <location evidence="1">trans-Golgi network membrane</location>
        <topology evidence="1">Peripheral membrane protein</topology>
    </subcellularLocation>
    <subcellularLocation>
        <location evidence="1">Early endosome membrane</location>
        <topology evidence="1">Peripheral membrane protein</topology>
    </subcellularLocation>
    <subcellularLocation>
        <location evidence="1">Cytoplasmic vesicle</location>
        <location evidence="1">Clathrin-coated vesicle</location>
    </subcellularLocation>
</comment>
<comment type="domain">
    <text evidence="1">The CRAL-TRIO domain is required for targeting to the membrane and for binding PtdIns(3,5)P2.</text>
</comment>
<comment type="miscellaneous">
    <text evidence="1">Binding to PtdIns(3,5)P2 is not required for localization.</text>
</comment>
<accession>Q5SPP0</accession>
<evidence type="ECO:0000250" key="1"/>
<evidence type="ECO:0000255" key="2">
    <source>
        <dbReference type="PROSITE-ProRule" id="PRU00056"/>
    </source>
</evidence>
<evidence type="ECO:0000256" key="3">
    <source>
        <dbReference type="SAM" id="MobiDB-lite"/>
    </source>
</evidence>
<dbReference type="EMBL" id="AL845421">
    <property type="protein sequence ID" value="CAI11724.1"/>
    <property type="molecule type" value="Genomic_DNA"/>
</dbReference>
<dbReference type="EMBL" id="BC116475">
    <property type="protein sequence ID" value="AAI16476.1"/>
    <property type="molecule type" value="mRNA"/>
</dbReference>
<dbReference type="RefSeq" id="NP_001020716.1">
    <property type="nucleotide sequence ID" value="NM_001025545.2"/>
</dbReference>
<dbReference type="SMR" id="Q5SPP0"/>
<dbReference type="FunCoup" id="Q5SPP0">
    <property type="interactions" value="143"/>
</dbReference>
<dbReference type="STRING" id="7955.ENSDARP00000069597"/>
<dbReference type="PaxDb" id="7955-ENSDARP00000069597"/>
<dbReference type="Ensembl" id="ENSDART00000075112">
    <property type="protein sequence ID" value="ENSDARP00000069597"/>
    <property type="gene ID" value="ENSDARG00000053122"/>
</dbReference>
<dbReference type="GeneID" id="566769"/>
<dbReference type="KEGG" id="dre:566769"/>
<dbReference type="AGR" id="ZFIN:ZDB-GENE-041014-313"/>
<dbReference type="CTD" id="134829"/>
<dbReference type="ZFIN" id="ZDB-GENE-041014-313">
    <property type="gene designation" value="clvs2"/>
</dbReference>
<dbReference type="eggNOG" id="KOG1471">
    <property type="taxonomic scope" value="Eukaryota"/>
</dbReference>
<dbReference type="HOGENOM" id="CLU_046597_1_3_1"/>
<dbReference type="InParanoid" id="Q5SPP0"/>
<dbReference type="OMA" id="DEEPDYC"/>
<dbReference type="OrthoDB" id="7837562at2759"/>
<dbReference type="PhylomeDB" id="Q5SPP0"/>
<dbReference type="PRO" id="PR:Q5SPP0"/>
<dbReference type="Proteomes" id="UP000000437">
    <property type="component" value="Chromosome 20"/>
</dbReference>
<dbReference type="Bgee" id="ENSDARG00000053122">
    <property type="expression patterns" value="Expressed in retina and 4 other cell types or tissues"/>
</dbReference>
<dbReference type="GO" id="GO:0030136">
    <property type="term" value="C:clathrin-coated vesicle"/>
    <property type="evidence" value="ECO:0000250"/>
    <property type="project" value="UniProtKB"/>
</dbReference>
<dbReference type="GO" id="GO:0031901">
    <property type="term" value="C:early endosome membrane"/>
    <property type="evidence" value="ECO:0007669"/>
    <property type="project" value="UniProtKB-SubCell"/>
</dbReference>
<dbReference type="GO" id="GO:0005768">
    <property type="term" value="C:endosome"/>
    <property type="evidence" value="ECO:0000250"/>
    <property type="project" value="UniProtKB"/>
</dbReference>
<dbReference type="GO" id="GO:0005802">
    <property type="term" value="C:trans-Golgi network"/>
    <property type="evidence" value="ECO:0000250"/>
    <property type="project" value="UniProtKB"/>
</dbReference>
<dbReference type="GO" id="GO:1902936">
    <property type="term" value="F:phosphatidylinositol bisphosphate binding"/>
    <property type="evidence" value="ECO:0000318"/>
    <property type="project" value="GO_Central"/>
</dbReference>
<dbReference type="GO" id="GO:0080025">
    <property type="term" value="F:phosphatidylinositol-3,5-bisphosphate binding"/>
    <property type="evidence" value="ECO:0000250"/>
    <property type="project" value="UniProtKB"/>
</dbReference>
<dbReference type="GO" id="GO:0007040">
    <property type="term" value="P:lysosome organization"/>
    <property type="evidence" value="ECO:0000250"/>
    <property type="project" value="UniProtKB"/>
</dbReference>
<dbReference type="GO" id="GO:0072015">
    <property type="term" value="P:podocyte development"/>
    <property type="evidence" value="ECO:0000315"/>
    <property type="project" value="ZFIN"/>
</dbReference>
<dbReference type="GO" id="GO:0097205">
    <property type="term" value="P:renal filtration"/>
    <property type="evidence" value="ECO:0000315"/>
    <property type="project" value="ZFIN"/>
</dbReference>
<dbReference type="CDD" id="cd00170">
    <property type="entry name" value="SEC14"/>
    <property type="match status" value="1"/>
</dbReference>
<dbReference type="FunFam" id="1.10.8.20:FF:000001">
    <property type="entry name" value="Alpha-tocopherol transfer protein-like"/>
    <property type="match status" value="1"/>
</dbReference>
<dbReference type="FunFam" id="3.40.525.10:FF:000002">
    <property type="entry name" value="Alpha-tocopherol transfer protein-like"/>
    <property type="match status" value="1"/>
</dbReference>
<dbReference type="Gene3D" id="1.20.5.1200">
    <property type="entry name" value="Alpha-tocopherol transfer"/>
    <property type="match status" value="1"/>
</dbReference>
<dbReference type="Gene3D" id="3.40.525.10">
    <property type="entry name" value="CRAL-TRIO lipid binding domain"/>
    <property type="match status" value="1"/>
</dbReference>
<dbReference type="Gene3D" id="1.10.8.20">
    <property type="entry name" value="N-terminal domain of phosphatidylinositol transfer protein sec14p"/>
    <property type="match status" value="1"/>
</dbReference>
<dbReference type="InterPro" id="IPR001251">
    <property type="entry name" value="CRAL-TRIO_dom"/>
</dbReference>
<dbReference type="InterPro" id="IPR036865">
    <property type="entry name" value="CRAL-TRIO_dom_sf"/>
</dbReference>
<dbReference type="InterPro" id="IPR011074">
    <property type="entry name" value="CRAL/TRIO_N_dom"/>
</dbReference>
<dbReference type="InterPro" id="IPR036273">
    <property type="entry name" value="CRAL/TRIO_N_dom_sf"/>
</dbReference>
<dbReference type="PANTHER" id="PTHR10174">
    <property type="entry name" value="ALPHA-TOCOPHEROL TRANSFER PROTEIN-RELATED"/>
    <property type="match status" value="1"/>
</dbReference>
<dbReference type="PANTHER" id="PTHR10174:SF73">
    <property type="entry name" value="CLAVESIN-2"/>
    <property type="match status" value="1"/>
</dbReference>
<dbReference type="Pfam" id="PF00650">
    <property type="entry name" value="CRAL_TRIO"/>
    <property type="match status" value="1"/>
</dbReference>
<dbReference type="Pfam" id="PF03765">
    <property type="entry name" value="CRAL_TRIO_N"/>
    <property type="match status" value="1"/>
</dbReference>
<dbReference type="PRINTS" id="PR00180">
    <property type="entry name" value="CRETINALDHBP"/>
</dbReference>
<dbReference type="SMART" id="SM01100">
    <property type="entry name" value="CRAL_TRIO_N"/>
    <property type="match status" value="1"/>
</dbReference>
<dbReference type="SMART" id="SM00516">
    <property type="entry name" value="SEC14"/>
    <property type="match status" value="1"/>
</dbReference>
<dbReference type="SUPFAM" id="SSF52087">
    <property type="entry name" value="CRAL/TRIO domain"/>
    <property type="match status" value="1"/>
</dbReference>
<dbReference type="SUPFAM" id="SSF46938">
    <property type="entry name" value="CRAL/TRIO N-terminal domain"/>
    <property type="match status" value="1"/>
</dbReference>
<dbReference type="PROSITE" id="PS50191">
    <property type="entry name" value="CRAL_TRIO"/>
    <property type="match status" value="1"/>
</dbReference>
<reference key="1">
    <citation type="journal article" date="2013" name="Nature">
        <title>The zebrafish reference genome sequence and its relationship to the human genome.</title>
        <authorList>
            <person name="Howe K."/>
            <person name="Clark M.D."/>
            <person name="Torroja C.F."/>
            <person name="Torrance J."/>
            <person name="Berthelot C."/>
            <person name="Muffato M."/>
            <person name="Collins J.E."/>
            <person name="Humphray S."/>
            <person name="McLaren K."/>
            <person name="Matthews L."/>
            <person name="McLaren S."/>
            <person name="Sealy I."/>
            <person name="Caccamo M."/>
            <person name="Churcher C."/>
            <person name="Scott C."/>
            <person name="Barrett J.C."/>
            <person name="Koch R."/>
            <person name="Rauch G.J."/>
            <person name="White S."/>
            <person name="Chow W."/>
            <person name="Kilian B."/>
            <person name="Quintais L.T."/>
            <person name="Guerra-Assuncao J.A."/>
            <person name="Zhou Y."/>
            <person name="Gu Y."/>
            <person name="Yen J."/>
            <person name="Vogel J.H."/>
            <person name="Eyre T."/>
            <person name="Redmond S."/>
            <person name="Banerjee R."/>
            <person name="Chi J."/>
            <person name="Fu B."/>
            <person name="Langley E."/>
            <person name="Maguire S.F."/>
            <person name="Laird G.K."/>
            <person name="Lloyd D."/>
            <person name="Kenyon E."/>
            <person name="Donaldson S."/>
            <person name="Sehra H."/>
            <person name="Almeida-King J."/>
            <person name="Loveland J."/>
            <person name="Trevanion S."/>
            <person name="Jones M."/>
            <person name="Quail M."/>
            <person name="Willey D."/>
            <person name="Hunt A."/>
            <person name="Burton J."/>
            <person name="Sims S."/>
            <person name="McLay K."/>
            <person name="Plumb B."/>
            <person name="Davis J."/>
            <person name="Clee C."/>
            <person name="Oliver K."/>
            <person name="Clark R."/>
            <person name="Riddle C."/>
            <person name="Elliot D."/>
            <person name="Threadgold G."/>
            <person name="Harden G."/>
            <person name="Ware D."/>
            <person name="Begum S."/>
            <person name="Mortimore B."/>
            <person name="Kerry G."/>
            <person name="Heath P."/>
            <person name="Phillimore B."/>
            <person name="Tracey A."/>
            <person name="Corby N."/>
            <person name="Dunn M."/>
            <person name="Johnson C."/>
            <person name="Wood J."/>
            <person name="Clark S."/>
            <person name="Pelan S."/>
            <person name="Griffiths G."/>
            <person name="Smith M."/>
            <person name="Glithero R."/>
            <person name="Howden P."/>
            <person name="Barker N."/>
            <person name="Lloyd C."/>
            <person name="Stevens C."/>
            <person name="Harley J."/>
            <person name="Holt K."/>
            <person name="Panagiotidis G."/>
            <person name="Lovell J."/>
            <person name="Beasley H."/>
            <person name="Henderson C."/>
            <person name="Gordon D."/>
            <person name="Auger K."/>
            <person name="Wright D."/>
            <person name="Collins J."/>
            <person name="Raisen C."/>
            <person name="Dyer L."/>
            <person name="Leung K."/>
            <person name="Robertson L."/>
            <person name="Ambridge K."/>
            <person name="Leongamornlert D."/>
            <person name="McGuire S."/>
            <person name="Gilderthorp R."/>
            <person name="Griffiths C."/>
            <person name="Manthravadi D."/>
            <person name="Nichol S."/>
            <person name="Barker G."/>
            <person name="Whitehead S."/>
            <person name="Kay M."/>
            <person name="Brown J."/>
            <person name="Murnane C."/>
            <person name="Gray E."/>
            <person name="Humphries M."/>
            <person name="Sycamore N."/>
            <person name="Barker D."/>
            <person name="Saunders D."/>
            <person name="Wallis J."/>
            <person name="Babbage A."/>
            <person name="Hammond S."/>
            <person name="Mashreghi-Mohammadi M."/>
            <person name="Barr L."/>
            <person name="Martin S."/>
            <person name="Wray P."/>
            <person name="Ellington A."/>
            <person name="Matthews N."/>
            <person name="Ellwood M."/>
            <person name="Woodmansey R."/>
            <person name="Clark G."/>
            <person name="Cooper J."/>
            <person name="Tromans A."/>
            <person name="Grafham D."/>
            <person name="Skuce C."/>
            <person name="Pandian R."/>
            <person name="Andrews R."/>
            <person name="Harrison E."/>
            <person name="Kimberley A."/>
            <person name="Garnett J."/>
            <person name="Fosker N."/>
            <person name="Hall R."/>
            <person name="Garner P."/>
            <person name="Kelly D."/>
            <person name="Bird C."/>
            <person name="Palmer S."/>
            <person name="Gehring I."/>
            <person name="Berger A."/>
            <person name="Dooley C.M."/>
            <person name="Ersan-Urun Z."/>
            <person name="Eser C."/>
            <person name="Geiger H."/>
            <person name="Geisler M."/>
            <person name="Karotki L."/>
            <person name="Kirn A."/>
            <person name="Konantz J."/>
            <person name="Konantz M."/>
            <person name="Oberlander M."/>
            <person name="Rudolph-Geiger S."/>
            <person name="Teucke M."/>
            <person name="Lanz C."/>
            <person name="Raddatz G."/>
            <person name="Osoegawa K."/>
            <person name="Zhu B."/>
            <person name="Rapp A."/>
            <person name="Widaa S."/>
            <person name="Langford C."/>
            <person name="Yang F."/>
            <person name="Schuster S.C."/>
            <person name="Carter N.P."/>
            <person name="Harrow J."/>
            <person name="Ning Z."/>
            <person name="Herrero J."/>
            <person name="Searle S.M."/>
            <person name="Enright A."/>
            <person name="Geisler R."/>
            <person name="Plasterk R.H."/>
            <person name="Lee C."/>
            <person name="Westerfield M."/>
            <person name="de Jong P.J."/>
            <person name="Zon L.I."/>
            <person name="Postlethwait J.H."/>
            <person name="Nusslein-Volhard C."/>
            <person name="Hubbard T.J."/>
            <person name="Roest Crollius H."/>
            <person name="Rogers J."/>
            <person name="Stemple D.L."/>
        </authorList>
    </citation>
    <scope>NUCLEOTIDE SEQUENCE [LARGE SCALE GENOMIC DNA]</scope>
    <source>
        <strain>Tuebingen</strain>
    </source>
</reference>
<reference key="2">
    <citation type="submission" date="2006-05" db="EMBL/GenBank/DDBJ databases">
        <authorList>
            <consortium name="NIH - Zebrafish Gene Collection (ZGC) project"/>
        </authorList>
    </citation>
    <scope>NUCLEOTIDE SEQUENCE [LARGE SCALE MRNA]</scope>
    <source>
        <tissue>Brain</tissue>
    </source>
</reference>
<keyword id="KW-0968">Cytoplasmic vesicle</keyword>
<keyword id="KW-0967">Endosome</keyword>
<keyword id="KW-0333">Golgi apparatus</keyword>
<keyword id="KW-0446">Lipid-binding</keyword>
<keyword id="KW-0472">Membrane</keyword>
<keyword id="KW-1185">Reference proteome</keyword>